<feature type="chain" id="PRO_1000071006" description="SsrA-binding protein">
    <location>
        <begin position="1"/>
        <end position="154"/>
    </location>
</feature>
<name>SSRP_STAAE</name>
<comment type="function">
    <text evidence="1">Required for rescue of stalled ribosomes mediated by trans-translation. Binds to transfer-messenger RNA (tmRNA), required for stable association of tmRNA with ribosomes. tmRNA and SmpB together mimic tRNA shape, replacing the anticodon stem-loop with SmpB. tmRNA is encoded by the ssrA gene; the 2 termini fold to resemble tRNA(Ala) and it encodes a 'tag peptide', a short internal open reading frame. During trans-translation Ala-aminoacylated tmRNA acts like a tRNA, entering the A-site of stalled ribosomes, displacing the stalled mRNA. The ribosome then switches to translate the ORF on the tmRNA; the nascent peptide is terminated with the 'tag peptide' encoded by the tmRNA and targeted for degradation. The ribosome is freed to recommence translation, which seems to be the essential function of trans-translation.</text>
</comment>
<comment type="subcellular location">
    <subcellularLocation>
        <location evidence="1">Cytoplasm</location>
    </subcellularLocation>
    <text evidence="1">The tmRNA-SmpB complex associates with stalled 70S ribosomes.</text>
</comment>
<comment type="similarity">
    <text evidence="1">Belongs to the SmpB family.</text>
</comment>
<protein>
    <recommendedName>
        <fullName evidence="1">SsrA-binding protein</fullName>
    </recommendedName>
    <alternativeName>
        <fullName evidence="1">Small protein B</fullName>
    </alternativeName>
</protein>
<accession>A6QF90</accession>
<gene>
    <name evidence="1" type="primary">smpB</name>
    <name type="ordered locus">NWMN_0750</name>
</gene>
<evidence type="ECO:0000255" key="1">
    <source>
        <dbReference type="HAMAP-Rule" id="MF_00023"/>
    </source>
</evidence>
<reference key="1">
    <citation type="journal article" date="2008" name="J. Bacteriol.">
        <title>Genome sequence of Staphylococcus aureus strain Newman and comparative analysis of staphylococcal genomes: polymorphism and evolution of two major pathogenicity islands.</title>
        <authorList>
            <person name="Baba T."/>
            <person name="Bae T."/>
            <person name="Schneewind O."/>
            <person name="Takeuchi F."/>
            <person name="Hiramatsu K."/>
        </authorList>
    </citation>
    <scope>NUCLEOTIDE SEQUENCE [LARGE SCALE GENOMIC DNA]</scope>
    <source>
        <strain>Newman</strain>
    </source>
</reference>
<organism>
    <name type="scientific">Staphylococcus aureus (strain Newman)</name>
    <dbReference type="NCBI Taxonomy" id="426430"/>
    <lineage>
        <taxon>Bacteria</taxon>
        <taxon>Bacillati</taxon>
        <taxon>Bacillota</taxon>
        <taxon>Bacilli</taxon>
        <taxon>Bacillales</taxon>
        <taxon>Staphylococcaceae</taxon>
        <taxon>Staphylococcus</taxon>
    </lineage>
</organism>
<sequence length="154" mass="17756">MAKKKSPGTLAENRKARHDYNIEDTIEAGIVLQGTEIKSIRRGSANLKDSYAQVKNGEMYLNNMHIAPYEEGNRFNHDPLRSRKLLLHKREIIKLGDQTREIGYSIVPLKLYLKHGHCKVLLGVARGKKKYDKRQALKEKAVKRDVARDMKARY</sequence>
<proteinExistence type="inferred from homology"/>
<dbReference type="EMBL" id="AP009351">
    <property type="protein sequence ID" value="BAF67022.1"/>
    <property type="molecule type" value="Genomic_DNA"/>
</dbReference>
<dbReference type="RefSeq" id="WP_001085185.1">
    <property type="nucleotide sequence ID" value="NZ_JBBIAE010000002.1"/>
</dbReference>
<dbReference type="SMR" id="A6QF90"/>
<dbReference type="KEGG" id="sae:NWMN_0750"/>
<dbReference type="HOGENOM" id="CLU_108953_0_0_9"/>
<dbReference type="Proteomes" id="UP000006386">
    <property type="component" value="Chromosome"/>
</dbReference>
<dbReference type="GO" id="GO:0005829">
    <property type="term" value="C:cytosol"/>
    <property type="evidence" value="ECO:0007669"/>
    <property type="project" value="TreeGrafter"/>
</dbReference>
<dbReference type="GO" id="GO:0003723">
    <property type="term" value="F:RNA binding"/>
    <property type="evidence" value="ECO:0007669"/>
    <property type="project" value="UniProtKB-UniRule"/>
</dbReference>
<dbReference type="GO" id="GO:0070929">
    <property type="term" value="P:trans-translation"/>
    <property type="evidence" value="ECO:0007669"/>
    <property type="project" value="UniProtKB-UniRule"/>
</dbReference>
<dbReference type="CDD" id="cd09294">
    <property type="entry name" value="SmpB"/>
    <property type="match status" value="1"/>
</dbReference>
<dbReference type="Gene3D" id="2.40.280.10">
    <property type="match status" value="1"/>
</dbReference>
<dbReference type="HAMAP" id="MF_00023">
    <property type="entry name" value="SmpB"/>
    <property type="match status" value="1"/>
</dbReference>
<dbReference type="InterPro" id="IPR023620">
    <property type="entry name" value="SmpB"/>
</dbReference>
<dbReference type="InterPro" id="IPR000037">
    <property type="entry name" value="SsrA-bd_prot"/>
</dbReference>
<dbReference type="InterPro" id="IPR020081">
    <property type="entry name" value="SsrA-bd_prot_CS"/>
</dbReference>
<dbReference type="NCBIfam" id="NF003843">
    <property type="entry name" value="PRK05422.1"/>
    <property type="match status" value="1"/>
</dbReference>
<dbReference type="NCBIfam" id="TIGR00086">
    <property type="entry name" value="smpB"/>
    <property type="match status" value="1"/>
</dbReference>
<dbReference type="PANTHER" id="PTHR30308:SF2">
    <property type="entry name" value="SSRA-BINDING PROTEIN"/>
    <property type="match status" value="1"/>
</dbReference>
<dbReference type="PANTHER" id="PTHR30308">
    <property type="entry name" value="TMRNA-BINDING COMPONENT OF TRANS-TRANSLATION TAGGING COMPLEX"/>
    <property type="match status" value="1"/>
</dbReference>
<dbReference type="Pfam" id="PF01668">
    <property type="entry name" value="SmpB"/>
    <property type="match status" value="1"/>
</dbReference>
<dbReference type="SUPFAM" id="SSF74982">
    <property type="entry name" value="Small protein B (SmpB)"/>
    <property type="match status" value="1"/>
</dbReference>
<dbReference type="PROSITE" id="PS01317">
    <property type="entry name" value="SSRP"/>
    <property type="match status" value="1"/>
</dbReference>
<keyword id="KW-0963">Cytoplasm</keyword>
<keyword id="KW-0694">RNA-binding</keyword>